<organism>
    <name type="scientific">Arabidopsis thaliana</name>
    <name type="common">Mouse-ear cress</name>
    <dbReference type="NCBI Taxonomy" id="3702"/>
    <lineage>
        <taxon>Eukaryota</taxon>
        <taxon>Viridiplantae</taxon>
        <taxon>Streptophyta</taxon>
        <taxon>Embryophyta</taxon>
        <taxon>Tracheophyta</taxon>
        <taxon>Spermatophyta</taxon>
        <taxon>Magnoliopsida</taxon>
        <taxon>eudicotyledons</taxon>
        <taxon>Gunneridae</taxon>
        <taxon>Pentapetalae</taxon>
        <taxon>rosids</taxon>
        <taxon>malvids</taxon>
        <taxon>Brassicales</taxon>
        <taxon>Brassicaceae</taxon>
        <taxon>Camelineae</taxon>
        <taxon>Arabidopsis</taxon>
    </lineage>
</organism>
<name>FDL5_ARATH</name>
<keyword id="KW-0433">Leucine-rich repeat</keyword>
<keyword id="KW-1185">Reference proteome</keyword>
<keyword id="KW-0677">Repeat</keyword>
<evidence type="ECO:0000255" key="1">
    <source>
        <dbReference type="PROSITE-ProRule" id="PRU00080"/>
    </source>
</evidence>
<protein>
    <recommendedName>
        <fullName>Putative F-box/FBD/LRR-repeat protein At1g22000</fullName>
    </recommendedName>
</protein>
<proteinExistence type="predicted"/>
<dbReference type="EMBL" id="AC069252">
    <property type="protein sequence ID" value="AAF86543.1"/>
    <property type="molecule type" value="Genomic_DNA"/>
</dbReference>
<dbReference type="EMBL" id="CP002684">
    <property type="protein sequence ID" value="AEE30183.2"/>
    <property type="molecule type" value="Genomic_DNA"/>
</dbReference>
<dbReference type="RefSeq" id="NP_173619.3">
    <property type="nucleotide sequence ID" value="NM_102049.3"/>
</dbReference>
<dbReference type="PaxDb" id="3702-AT1G22000.1"/>
<dbReference type="ProteomicsDB" id="230503"/>
<dbReference type="EnsemblPlants" id="AT1G22000.1">
    <property type="protein sequence ID" value="AT1G22000.1"/>
    <property type="gene ID" value="AT1G22000"/>
</dbReference>
<dbReference type="GeneID" id="838803"/>
<dbReference type="Gramene" id="AT1G22000.1">
    <property type="protein sequence ID" value="AT1G22000.1"/>
    <property type="gene ID" value="AT1G22000"/>
</dbReference>
<dbReference type="KEGG" id="ath:AT1G22000"/>
<dbReference type="Araport" id="AT1G22000"/>
<dbReference type="TAIR" id="AT1G22000"/>
<dbReference type="HOGENOM" id="CLU_385601_0_0_1"/>
<dbReference type="InParanoid" id="Q9LM63"/>
<dbReference type="OMA" id="HLEIFRW"/>
<dbReference type="PhylomeDB" id="Q9LM63"/>
<dbReference type="PRO" id="PR:Q9LM63"/>
<dbReference type="Proteomes" id="UP000006548">
    <property type="component" value="Chromosome 1"/>
</dbReference>
<dbReference type="ExpressionAtlas" id="Q9LM63">
    <property type="expression patterns" value="baseline and differential"/>
</dbReference>
<dbReference type="CDD" id="cd22160">
    <property type="entry name" value="F-box_AtFBL13-like"/>
    <property type="match status" value="1"/>
</dbReference>
<dbReference type="InterPro" id="IPR036047">
    <property type="entry name" value="F-box-like_dom_sf"/>
</dbReference>
<dbReference type="InterPro" id="IPR053781">
    <property type="entry name" value="F-box_AtFBL13-like"/>
</dbReference>
<dbReference type="InterPro" id="IPR001810">
    <property type="entry name" value="F-box_dom"/>
</dbReference>
<dbReference type="InterPro" id="IPR006566">
    <property type="entry name" value="FBD"/>
</dbReference>
<dbReference type="InterPro" id="IPR050232">
    <property type="entry name" value="FBL13/AtMIF1-like"/>
</dbReference>
<dbReference type="InterPro" id="IPR055411">
    <property type="entry name" value="LRR_FXL15/At3g58940/PEG3-like"/>
</dbReference>
<dbReference type="PANTHER" id="PTHR31900:SF34">
    <property type="entry name" value="EMB|CAB62440.1-RELATED"/>
    <property type="match status" value="1"/>
</dbReference>
<dbReference type="PANTHER" id="PTHR31900">
    <property type="entry name" value="F-BOX/RNI SUPERFAMILY PROTEIN-RELATED"/>
    <property type="match status" value="1"/>
</dbReference>
<dbReference type="Pfam" id="PF00646">
    <property type="entry name" value="F-box"/>
    <property type="match status" value="1"/>
</dbReference>
<dbReference type="Pfam" id="PF08387">
    <property type="entry name" value="FBD"/>
    <property type="match status" value="1"/>
</dbReference>
<dbReference type="Pfam" id="PF24758">
    <property type="entry name" value="LRR_At5g56370"/>
    <property type="match status" value="1"/>
</dbReference>
<dbReference type="SMART" id="SM00579">
    <property type="entry name" value="FBD"/>
    <property type="match status" value="1"/>
</dbReference>
<dbReference type="SMART" id="SM00256">
    <property type="entry name" value="FBOX"/>
    <property type="match status" value="1"/>
</dbReference>
<dbReference type="SUPFAM" id="SSF81383">
    <property type="entry name" value="F-box domain"/>
    <property type="match status" value="1"/>
</dbReference>
<dbReference type="PROSITE" id="PS50181">
    <property type="entry name" value="FBOX"/>
    <property type="match status" value="1"/>
</dbReference>
<reference key="1">
    <citation type="journal article" date="2000" name="Nature">
        <title>Sequence and analysis of chromosome 1 of the plant Arabidopsis thaliana.</title>
        <authorList>
            <person name="Theologis A."/>
            <person name="Ecker J.R."/>
            <person name="Palm C.J."/>
            <person name="Federspiel N.A."/>
            <person name="Kaul S."/>
            <person name="White O."/>
            <person name="Alonso J."/>
            <person name="Altafi H."/>
            <person name="Araujo R."/>
            <person name="Bowman C.L."/>
            <person name="Brooks S.Y."/>
            <person name="Buehler E."/>
            <person name="Chan A."/>
            <person name="Chao Q."/>
            <person name="Chen H."/>
            <person name="Cheuk R.F."/>
            <person name="Chin C.W."/>
            <person name="Chung M.K."/>
            <person name="Conn L."/>
            <person name="Conway A.B."/>
            <person name="Conway A.R."/>
            <person name="Creasy T.H."/>
            <person name="Dewar K."/>
            <person name="Dunn P."/>
            <person name="Etgu P."/>
            <person name="Feldblyum T.V."/>
            <person name="Feng J.-D."/>
            <person name="Fong B."/>
            <person name="Fujii C.Y."/>
            <person name="Gill J.E."/>
            <person name="Goldsmith A.D."/>
            <person name="Haas B."/>
            <person name="Hansen N.F."/>
            <person name="Hughes B."/>
            <person name="Huizar L."/>
            <person name="Hunter J.L."/>
            <person name="Jenkins J."/>
            <person name="Johnson-Hopson C."/>
            <person name="Khan S."/>
            <person name="Khaykin E."/>
            <person name="Kim C.J."/>
            <person name="Koo H.L."/>
            <person name="Kremenetskaia I."/>
            <person name="Kurtz D.B."/>
            <person name="Kwan A."/>
            <person name="Lam B."/>
            <person name="Langin-Hooper S."/>
            <person name="Lee A."/>
            <person name="Lee J.M."/>
            <person name="Lenz C.A."/>
            <person name="Li J.H."/>
            <person name="Li Y.-P."/>
            <person name="Lin X."/>
            <person name="Liu S.X."/>
            <person name="Liu Z.A."/>
            <person name="Luros J.S."/>
            <person name="Maiti R."/>
            <person name="Marziali A."/>
            <person name="Militscher J."/>
            <person name="Miranda M."/>
            <person name="Nguyen M."/>
            <person name="Nierman W.C."/>
            <person name="Osborne B.I."/>
            <person name="Pai G."/>
            <person name="Peterson J."/>
            <person name="Pham P.K."/>
            <person name="Rizzo M."/>
            <person name="Rooney T."/>
            <person name="Rowley D."/>
            <person name="Sakano H."/>
            <person name="Salzberg S.L."/>
            <person name="Schwartz J.R."/>
            <person name="Shinn P."/>
            <person name="Southwick A.M."/>
            <person name="Sun H."/>
            <person name="Tallon L.J."/>
            <person name="Tambunga G."/>
            <person name="Toriumi M.J."/>
            <person name="Town C.D."/>
            <person name="Utterback T."/>
            <person name="Van Aken S."/>
            <person name="Vaysberg M."/>
            <person name="Vysotskaia V.S."/>
            <person name="Walker M."/>
            <person name="Wu D."/>
            <person name="Yu G."/>
            <person name="Fraser C.M."/>
            <person name="Venter J.C."/>
            <person name="Davis R.W."/>
        </authorList>
    </citation>
    <scope>NUCLEOTIDE SEQUENCE [LARGE SCALE GENOMIC DNA]</scope>
    <source>
        <strain>cv. Columbia</strain>
    </source>
</reference>
<reference key="2">
    <citation type="journal article" date="2017" name="Plant J.">
        <title>Araport11: a complete reannotation of the Arabidopsis thaliana reference genome.</title>
        <authorList>
            <person name="Cheng C.Y."/>
            <person name="Krishnakumar V."/>
            <person name="Chan A.P."/>
            <person name="Thibaud-Nissen F."/>
            <person name="Schobel S."/>
            <person name="Town C.D."/>
        </authorList>
    </citation>
    <scope>GENOME REANNOTATION</scope>
    <source>
        <strain>cv. Columbia</strain>
    </source>
</reference>
<accession>Q9LM63</accession>
<accession>F4HZS1</accession>
<sequence length="465" mass="53249">MSFLWDIMPIDKHLSTVPETEGCQQRIETRICALPDDLLLQILPHVPTKEAVATSILSKQWRYVWLMLPKLEFKDEGSESVGWFIKKSLQLHKAPKLDCLIVELGPHCPIDVDVRKWVENAVNRDVKDLDFTLLWSAAPTSFPKSLYTCDTLVCLTLSNQILVDVSSPASLPSLLDLSLHYVVYKDDGSLVRLLSSSPVLKRLSVHSHEDDNLKTFTVKVSSLESLNYDENWLKDEVEDNEVDEVVDNEVEVDDLNGSLVIDSPALKELHLSEVWDYCLIENMSFLDEAFISNVPYPDEKFLRSLSSVKHLFLLFSKSMVACCNAIKFSWLIEFYFFPISLVDWLMPLMFLLQNSPKLKTPTIDNDFECLSLSWNQPSSIPGCLLSHLETFRWRGYGGREDAKKLLMTYILANSKCLKTVEISLLATCNLEETQKELKSMPRISQSSQLLISTKKLWRINERTYL</sequence>
<feature type="chain" id="PRO_0000283098" description="Putative F-box/FBD/LRR-repeat protein At1g22000">
    <location>
        <begin position="1"/>
        <end position="465"/>
    </location>
</feature>
<feature type="domain" description="F-box" evidence="1">
    <location>
        <begin position="28"/>
        <end position="74"/>
    </location>
</feature>
<feature type="repeat" description="LRR 1">
    <location>
        <begin position="154"/>
        <end position="181"/>
    </location>
</feature>
<feature type="repeat" description="LRR 2">
    <location>
        <begin position="182"/>
        <end position="207"/>
    </location>
</feature>
<feature type="repeat" description="LRR 3">
    <location>
        <begin position="210"/>
        <end position="230"/>
    </location>
</feature>
<feature type="repeat" description="LRR 4">
    <location>
        <begin position="248"/>
        <end position="273"/>
    </location>
</feature>
<feature type="repeat" description="LRR 5">
    <location>
        <begin position="339"/>
        <end position="365"/>
    </location>
</feature>
<feature type="domain" description="FBD">
    <location>
        <begin position="373"/>
        <end position="424"/>
    </location>
</feature>
<gene>
    <name type="ordered locus">At1g22000</name>
    <name type="ORF">F2E2.3</name>
</gene>